<dbReference type="EMBL" id="AY685920">
    <property type="protein sequence ID" value="AAV65057.1"/>
    <property type="molecule type" value="Genomic_RNA"/>
</dbReference>
<dbReference type="EMBL" id="AY685921">
    <property type="protein sequence ID" value="AAV65066.1"/>
    <property type="molecule type" value="Genomic_RNA"/>
</dbReference>
<dbReference type="Proteomes" id="UP000130023">
    <property type="component" value="Genome"/>
</dbReference>
<dbReference type="Proteomes" id="UP000181577">
    <property type="component" value="Genome"/>
</dbReference>
<dbReference type="GO" id="GO:0030430">
    <property type="term" value="C:host cell cytoplasm"/>
    <property type="evidence" value="ECO:0007669"/>
    <property type="project" value="UniProtKB-SubCell"/>
</dbReference>
<dbReference type="GO" id="GO:0046872">
    <property type="term" value="F:metal ion binding"/>
    <property type="evidence" value="ECO:0007669"/>
    <property type="project" value="InterPro"/>
</dbReference>
<dbReference type="GO" id="GO:0039554">
    <property type="term" value="P:symbiont-mediated suppression of host cytoplasmic pattern recognition receptor signaling pathway via inhibition of MDA-5 activity"/>
    <property type="evidence" value="ECO:0007669"/>
    <property type="project" value="UniProtKB-KW"/>
</dbReference>
<dbReference type="GO" id="GO:0039502">
    <property type="term" value="P:symbiont-mediated suppression of host type I interferon-mediated signaling pathway"/>
    <property type="evidence" value="ECO:0007669"/>
    <property type="project" value="UniProtKB-KW"/>
</dbReference>
<dbReference type="FunFam" id="4.10.80.340:FF:000001">
    <property type="entry name" value="Protein V"/>
    <property type="match status" value="1"/>
</dbReference>
<dbReference type="Gene3D" id="4.10.80.340">
    <property type="match status" value="1"/>
</dbReference>
<dbReference type="InterPro" id="IPR024279">
    <property type="entry name" value="Paramyx_V_Zn-bd"/>
</dbReference>
<dbReference type="Pfam" id="PF13008">
    <property type="entry name" value="zf-Paramyx-P"/>
    <property type="match status" value="1"/>
</dbReference>
<accession>Q5SC47</accession>
<reference key="1">
    <citation type="journal article" date="2005" name="Virus Res.">
        <title>Genetic characterization of L-Zagreb mumps vaccine strain.</title>
        <authorList>
            <person name="Ivancic J."/>
            <person name="Kosutic Gulija T."/>
            <person name="Forcic D."/>
            <person name="Baricevic M."/>
            <person name="Jug R."/>
            <person name="Mesko-Prejac M."/>
            <person name="Mazuran R."/>
        </authorList>
    </citation>
    <scope>NUCLEOTIDE SEQUENCE [GENOMIC RNA]</scope>
    <source>
        <strain>L-Zagreb vaccine</strain>
    </source>
</reference>
<reference key="2">
    <citation type="journal article" date="1990" name="J. Virol.">
        <title>RNA editing by G-nucleotide insertion in mumps virus P-gene mRNA transcripts.</title>
        <authorList>
            <person name="Paterson R.G."/>
            <person name="Lamb R.A."/>
        </authorList>
    </citation>
    <scope>RNA EDITING</scope>
    <source>
        <strain>RW</strain>
    </source>
</reference>
<reference key="3">
    <citation type="journal article" date="2016" name="Virol. J.">
        <title>Identification of mumps virus protein and lipid composition by mass spectrometry.</title>
        <authorList>
            <person name="Brgles M."/>
            <person name="Bonta M."/>
            <person name="Santak M."/>
            <person name="Jagusic M."/>
            <person name="Forcic D."/>
            <person name="Halassy B."/>
            <person name="Allmaier G."/>
            <person name="Marchetti-Deschmann M."/>
        </authorList>
    </citation>
    <scope>IDENTIFICATION BY MASS SPECTROMETRY</scope>
    <scope>SUBCELLULAR LOCATION</scope>
    <source>
        <strain>L-Zagreb vaccine</strain>
    </source>
</reference>
<reference key="4">
    <citation type="journal article" date="2018" name="Virol. J.">
        <title>Mass spectrometry-based investigation of measles and mumps virus proteome.</title>
        <authorList>
            <person name="Sviben D."/>
            <person name="Forcic D."/>
            <person name="Halassy B."/>
            <person name="Allmaier G."/>
            <person name="Marchetti-Deschmann M."/>
            <person name="Brgles M."/>
        </authorList>
    </citation>
    <scope>IDENTIFICATION BY MASS SPECTROMETRY</scope>
    <scope>SUBCELLULAR LOCATION</scope>
    <source>
        <strain>L-Zagreb vaccine</strain>
    </source>
</reference>
<organism>
    <name type="scientific">Mumps virus genotype N (strain L-Zagreb vaccine)</name>
    <name type="common">MuV</name>
    <dbReference type="NCBI Taxonomy" id="301186"/>
    <lineage>
        <taxon>Viruses</taxon>
        <taxon>Riboviria</taxon>
        <taxon>Orthornavirae</taxon>
        <taxon>Negarnaviricota</taxon>
        <taxon>Haploviricotina</taxon>
        <taxon>Monjiviricetes</taxon>
        <taxon>Mononegavirales</taxon>
        <taxon>Paramyxoviridae</taxon>
        <taxon>Rubulavirinae</taxon>
        <taxon>Orthorubulavirus</taxon>
        <taxon>Orthorubulavirus parotitidis</taxon>
        <taxon>Mumps orthorubulavirus</taxon>
    </lineage>
</organism>
<protein>
    <recommendedName>
        <fullName>Non-structural protein V</fullName>
    </recommendedName>
    <alternativeName>
        <fullName>Non-structural protein NS1</fullName>
    </alternativeName>
</protein>
<gene>
    <name evidence="8" type="primary">P/V/I</name>
</gene>
<gene>
    <name type="primary">P</name>
</gene>
<proteinExistence type="evidence at protein level"/>
<organismHost>
    <name type="scientific">Homo sapiens</name>
    <name type="common">Human</name>
    <dbReference type="NCBI Taxonomy" id="9606"/>
</organismHost>
<keyword id="KW-1035">Host cytoplasm</keyword>
<keyword id="KW-0945">Host-virus interaction</keyword>
<keyword id="KW-1090">Inhibition of host innate immune response by virus</keyword>
<keyword id="KW-1114">Inhibition of host interferon signaling pathway by virus</keyword>
<keyword id="KW-1089">Inhibition of host MDA5 by virus</keyword>
<keyword id="KW-1113">Inhibition of host RLR pathway by virus</keyword>
<keyword id="KW-0922">Interferon antiviral system evasion</keyword>
<keyword id="KW-0479">Metal-binding</keyword>
<keyword id="KW-0691">RNA editing</keyword>
<keyword id="KW-0899">Viral immunoevasion</keyword>
<keyword id="KW-0946">Virion</keyword>
<keyword id="KW-0862">Zinc</keyword>
<feature type="chain" id="PRO_0000462021" description="Non-structural protein V">
    <location>
        <begin position="1"/>
        <end position="224"/>
    </location>
</feature>
<feature type="region of interest" description="Disordered" evidence="4">
    <location>
        <begin position="57"/>
        <end position="98"/>
    </location>
</feature>
<feature type="region of interest" description="Disordered" evidence="4">
    <location>
        <begin position="144"/>
        <end position="172"/>
    </location>
</feature>
<feature type="binding site" evidence="1">
    <location>
        <position position="170"/>
    </location>
    <ligand>
        <name>Zn(2+)</name>
        <dbReference type="ChEBI" id="CHEBI:29105"/>
        <label>1</label>
    </ligand>
</feature>
<feature type="binding site" evidence="1">
    <location>
        <position position="189"/>
    </location>
    <ligand>
        <name>Zn(2+)</name>
        <dbReference type="ChEBI" id="CHEBI:29105"/>
        <label>1</label>
    </ligand>
</feature>
<feature type="binding site" evidence="1">
    <location>
        <position position="193"/>
    </location>
    <ligand>
        <name>Zn(2+)</name>
        <dbReference type="ChEBI" id="CHEBI:29105"/>
        <label>2</label>
    </ligand>
</feature>
<feature type="binding site" evidence="1">
    <location>
        <position position="205"/>
    </location>
    <ligand>
        <name>Zn(2+)</name>
        <dbReference type="ChEBI" id="CHEBI:29105"/>
        <label>2</label>
    </ligand>
</feature>
<feature type="binding site" evidence="1">
    <location>
        <position position="207"/>
    </location>
    <ligand>
        <name>Zn(2+)</name>
        <dbReference type="ChEBI" id="CHEBI:29105"/>
        <label>2</label>
    </ligand>
</feature>
<feature type="binding site" evidence="1">
    <location>
        <position position="210"/>
    </location>
    <ligand>
        <name>Zn(2+)</name>
        <dbReference type="ChEBI" id="CHEBI:29105"/>
        <label>2</label>
    </ligand>
</feature>
<feature type="binding site" evidence="1">
    <location>
        <position position="214"/>
    </location>
    <ligand>
        <name>Zn(2+)</name>
        <dbReference type="ChEBI" id="CHEBI:29105"/>
        <label>1</label>
    </ligand>
</feature>
<feature type="binding site" evidence="1">
    <location>
        <position position="217"/>
    </location>
    <ligand>
        <name>Zn(2+)</name>
        <dbReference type="ChEBI" id="CHEBI:29105"/>
        <label>1</label>
    </ligand>
</feature>
<sequence>MDQFIKQDETGDLIETGMNVANHFLSAPIQGTNSLSKATIIPGVAPVLIGNPEQKNIQYPTASHQGSKSKGRGSGAKPIIVSSSEGGTGGTQIPEPLFAQTGQGGVVTTVYQDPTIQPTGSYRSVELAKIGKERMINRFVEKPRTSTPVTEFKRGAGNGSPRPDNPRGGHRREWSLSWVQGEVRVFEWCNPICSPITAAARFHSCKCGNCPAKCDQCERDYGPP</sequence>
<evidence type="ECO:0000250" key="1">
    <source>
        <dbReference type="UniProtKB" id="P11207"/>
    </source>
</evidence>
<evidence type="ECO:0000250" key="2">
    <source>
        <dbReference type="UniProtKB" id="P30927"/>
    </source>
</evidence>
<evidence type="ECO:0000250" key="3">
    <source>
        <dbReference type="UniProtKB" id="P30928"/>
    </source>
</evidence>
<evidence type="ECO:0000256" key="4">
    <source>
        <dbReference type="SAM" id="MobiDB-lite"/>
    </source>
</evidence>
<evidence type="ECO:0000269" key="5">
    <source>
    </source>
</evidence>
<evidence type="ECO:0000269" key="6">
    <source>
    </source>
</evidence>
<evidence type="ECO:0000269" key="7">
    <source>
    </source>
</evidence>
<evidence type="ECO:0000305" key="8"/>
<comment type="function">
    <text evidence="2 3">Plays an essential role in the inhibition of host immune response. Prevents the establishment of cellular antiviral state by blocking interferon-alpha/beta (IFN-alpha/beta) production and signaling pathway. Interacts with host IFIH1/MDA5 and DHX58/LGP2 to inhibit the transduction pathway involved in the activation of IFN-beta promoter, thus protecting the virus against cell antiviral state (By similarity). Blocks the type I and II interferon signaling pathways by interacting with host STAT1, STAT2 and STAT3, and mediating their ubiquitination and subsequent proteasomal degradation (By similarity).</text>
</comment>
<comment type="subunit">
    <text evidence="2 3">Interacts with host IFIH1/MDA5 and DHX58/LGP2 (By similarity). Forms with host DDB1, CUL4A, STAT1, STAT2 and STAT3 the mumps virus V-dependent complex (VDC) (By similarity).</text>
</comment>
<comment type="subcellular location">
    <subcellularLocation>
        <location evidence="6 7">Virion</location>
    </subcellularLocation>
    <subcellularLocation>
        <location evidence="8">Host cytoplasm</location>
    </subcellularLocation>
</comment>
<comment type="RNA editing">
    <location>
        <position position="155" evidence="5"/>
    </location>
    <text evidence="5">Partially edited. RNA editing at this position consists of an insertion of 2 or 4 guanine nucleotides. The sequence displayed here is the V protein, derived from the unedited RNA. The edited RNA (+ 2 nucleotides) gives rise to the P protein (AC Q5SC57). The edited RNA (+ 4 nucleotide) gives rise to the I protein.</text>
</comment>
<comment type="similarity">
    <text evidence="8">Belongs to the paramyxoviruses V protein family.</text>
</comment>
<name>V_MUMPZ</name>